<reference key="1">
    <citation type="submission" date="2006-06" db="EMBL/GenBank/DDBJ databases">
        <title>Complete sequence of Pseudoalteromonas atlantica T6c.</title>
        <authorList>
            <consortium name="US DOE Joint Genome Institute"/>
            <person name="Copeland A."/>
            <person name="Lucas S."/>
            <person name="Lapidus A."/>
            <person name="Barry K."/>
            <person name="Detter J.C."/>
            <person name="Glavina del Rio T."/>
            <person name="Hammon N."/>
            <person name="Israni S."/>
            <person name="Dalin E."/>
            <person name="Tice H."/>
            <person name="Pitluck S."/>
            <person name="Saunders E."/>
            <person name="Brettin T."/>
            <person name="Bruce D."/>
            <person name="Han C."/>
            <person name="Tapia R."/>
            <person name="Gilna P."/>
            <person name="Schmutz J."/>
            <person name="Larimer F."/>
            <person name="Land M."/>
            <person name="Hauser L."/>
            <person name="Kyrpides N."/>
            <person name="Kim E."/>
            <person name="Karls A.C."/>
            <person name="Bartlett D."/>
            <person name="Higgins B.P."/>
            <person name="Richardson P."/>
        </authorList>
    </citation>
    <scope>NUCLEOTIDE SEQUENCE [LARGE SCALE GENOMIC DNA]</scope>
    <source>
        <strain>T6c / ATCC BAA-1087</strain>
    </source>
</reference>
<gene>
    <name evidence="1" type="primary">smg</name>
    <name type="ordered locus">Patl_0026</name>
</gene>
<feature type="chain" id="PRO_1000025659" description="Protein Smg homolog">
    <location>
        <begin position="1"/>
        <end position="158"/>
    </location>
</feature>
<organism>
    <name type="scientific">Pseudoalteromonas atlantica (strain T6c / ATCC BAA-1087)</name>
    <dbReference type="NCBI Taxonomy" id="3042615"/>
    <lineage>
        <taxon>Bacteria</taxon>
        <taxon>Pseudomonadati</taxon>
        <taxon>Pseudomonadota</taxon>
        <taxon>Gammaproteobacteria</taxon>
        <taxon>Alteromonadales</taxon>
        <taxon>Alteromonadaceae</taxon>
        <taxon>Paraglaciecola</taxon>
    </lineage>
</organism>
<dbReference type="EMBL" id="CP000388">
    <property type="protein sequence ID" value="ABG38559.1"/>
    <property type="molecule type" value="Genomic_DNA"/>
</dbReference>
<dbReference type="RefSeq" id="WP_006994873.1">
    <property type="nucleotide sequence ID" value="NC_008228.1"/>
</dbReference>
<dbReference type="SMR" id="Q15ZX9"/>
<dbReference type="STRING" id="342610.Patl_0026"/>
<dbReference type="KEGG" id="pat:Patl_0026"/>
<dbReference type="eggNOG" id="COG2922">
    <property type="taxonomic scope" value="Bacteria"/>
</dbReference>
<dbReference type="HOGENOM" id="CLU_133242_0_0_6"/>
<dbReference type="OrthoDB" id="9788984at2"/>
<dbReference type="Proteomes" id="UP000001981">
    <property type="component" value="Chromosome"/>
</dbReference>
<dbReference type="HAMAP" id="MF_00598">
    <property type="entry name" value="Smg"/>
    <property type="match status" value="1"/>
</dbReference>
<dbReference type="InterPro" id="IPR007456">
    <property type="entry name" value="Smg"/>
</dbReference>
<dbReference type="NCBIfam" id="NF002897">
    <property type="entry name" value="PRK03430.1"/>
    <property type="match status" value="1"/>
</dbReference>
<dbReference type="PANTHER" id="PTHR38692">
    <property type="entry name" value="PROTEIN SMG"/>
    <property type="match status" value="1"/>
</dbReference>
<dbReference type="PANTHER" id="PTHR38692:SF1">
    <property type="entry name" value="PROTEIN SMG"/>
    <property type="match status" value="1"/>
</dbReference>
<dbReference type="Pfam" id="PF04361">
    <property type="entry name" value="DUF494"/>
    <property type="match status" value="1"/>
</dbReference>
<name>SMG_PSEA6</name>
<comment type="similarity">
    <text evidence="1">Belongs to the Smg family.</text>
</comment>
<evidence type="ECO:0000255" key="1">
    <source>
        <dbReference type="HAMAP-Rule" id="MF_00598"/>
    </source>
</evidence>
<protein>
    <recommendedName>
        <fullName evidence="1">Protein Smg homolog</fullName>
    </recommendedName>
</protein>
<accession>Q15ZX9</accession>
<proteinExistence type="inferred from homology"/>
<sequence>MFDILMYLFENFIHSETEIRVDQDELTDELVRAGFHQDEIYKALSWLEKLAALQETDINPYLVKGPTSFVTRIYTHEEEMRLDIECRGFLMFLEQINVLDSTTREMVIDRVMEIDSKEFCLEDMKWVVLMVLFNVPGKENAYAQMEDLLFEEPEGPLH</sequence>